<accession>A9IMC9</accession>
<sequence>MDADVNLKTLPYRKCVGIVVFNHEGKVWVGRRLMTLAHADIDRSHRWQLPQGGIDEDEKPLDAAYRELYEETGIRSVKLIKEAQNWFYYDFPQELVACTLSNKYCGQMQKWFAFQFTGELSEIVINPPPDGNKAEFDQWKWIDLESLPSIAVSFKKHVYMKVVSEFRGSLRSL</sequence>
<protein>
    <recommendedName>
        <fullName evidence="1">RNA pyrophosphohydrolase</fullName>
        <ecNumber evidence="1">3.6.1.-</ecNumber>
    </recommendedName>
    <alternativeName>
        <fullName evidence="1">(Di)nucleoside polyphosphate hydrolase</fullName>
    </alternativeName>
</protein>
<reference key="1">
    <citation type="journal article" date="2007" name="Nat. Genet.">
        <title>Genomic analysis of Bartonella identifies type IV secretion systems as host adaptability factors.</title>
        <authorList>
            <person name="Saenz H.L."/>
            <person name="Engel P."/>
            <person name="Stoeckli M.C."/>
            <person name="Lanz C."/>
            <person name="Raddatz G."/>
            <person name="Vayssier-Taussat M."/>
            <person name="Birtles R."/>
            <person name="Schuster S.C."/>
            <person name="Dehio C."/>
        </authorList>
    </citation>
    <scope>NUCLEOTIDE SEQUENCE [LARGE SCALE GENOMIC DNA]</scope>
    <source>
        <strain>CIP 105476 / IBS 506</strain>
    </source>
</reference>
<comment type="function">
    <text evidence="1">Accelerates the degradation of transcripts by removing pyrophosphate from the 5'-end of triphosphorylated RNA, leading to a more labile monophosphorylated state that can stimulate subsequent ribonuclease cleavage.</text>
</comment>
<comment type="cofactor">
    <cofactor evidence="1">
        <name>a divalent metal cation</name>
        <dbReference type="ChEBI" id="CHEBI:60240"/>
    </cofactor>
</comment>
<comment type="similarity">
    <text evidence="1">Belongs to the Nudix hydrolase family. RppH subfamily.</text>
</comment>
<gene>
    <name evidence="1" type="primary">rppH</name>
    <name evidence="1" type="synonym">nudH</name>
    <name type="ordered locus">BT_0180</name>
</gene>
<proteinExistence type="inferred from homology"/>
<dbReference type="EC" id="3.6.1.-" evidence="1"/>
<dbReference type="EMBL" id="AM260525">
    <property type="protein sequence ID" value="CAK00664.1"/>
    <property type="molecule type" value="Genomic_DNA"/>
</dbReference>
<dbReference type="RefSeq" id="WP_012230533.1">
    <property type="nucleotide sequence ID" value="NC_010161.1"/>
</dbReference>
<dbReference type="SMR" id="A9IMC9"/>
<dbReference type="KEGG" id="btr:BT_0180"/>
<dbReference type="eggNOG" id="COG0494">
    <property type="taxonomic scope" value="Bacteria"/>
</dbReference>
<dbReference type="HOGENOM" id="CLU_087195_3_0_5"/>
<dbReference type="Proteomes" id="UP000001592">
    <property type="component" value="Chromosome"/>
</dbReference>
<dbReference type="GO" id="GO:0034432">
    <property type="term" value="F:bis(5'-adenosyl)-pentaphosphatase activity"/>
    <property type="evidence" value="ECO:0007669"/>
    <property type="project" value="TreeGrafter"/>
</dbReference>
<dbReference type="GO" id="GO:0008893">
    <property type="term" value="F:guanosine-3',5'-bis(diphosphate) 3'-diphosphatase activity"/>
    <property type="evidence" value="ECO:0007669"/>
    <property type="project" value="TreeGrafter"/>
</dbReference>
<dbReference type="GO" id="GO:0006753">
    <property type="term" value="P:nucleoside phosphate metabolic process"/>
    <property type="evidence" value="ECO:0007669"/>
    <property type="project" value="TreeGrafter"/>
</dbReference>
<dbReference type="GO" id="GO:0019693">
    <property type="term" value="P:ribose phosphate metabolic process"/>
    <property type="evidence" value="ECO:0007669"/>
    <property type="project" value="TreeGrafter"/>
</dbReference>
<dbReference type="CDD" id="cd03671">
    <property type="entry name" value="NUDIX_Ap4A_hydrolase_plant_like"/>
    <property type="match status" value="1"/>
</dbReference>
<dbReference type="Gene3D" id="3.90.79.10">
    <property type="entry name" value="Nucleoside Triphosphate Pyrophosphohydrolase"/>
    <property type="match status" value="1"/>
</dbReference>
<dbReference type="HAMAP" id="MF_00298">
    <property type="entry name" value="Nudix_RppH"/>
    <property type="match status" value="1"/>
</dbReference>
<dbReference type="InterPro" id="IPR020476">
    <property type="entry name" value="Nudix_hydrolase"/>
</dbReference>
<dbReference type="InterPro" id="IPR015797">
    <property type="entry name" value="NUDIX_hydrolase-like_dom_sf"/>
</dbReference>
<dbReference type="InterPro" id="IPR020084">
    <property type="entry name" value="NUDIX_hydrolase_CS"/>
</dbReference>
<dbReference type="InterPro" id="IPR000086">
    <property type="entry name" value="NUDIX_hydrolase_dom"/>
</dbReference>
<dbReference type="InterPro" id="IPR022927">
    <property type="entry name" value="RppH"/>
</dbReference>
<dbReference type="NCBIfam" id="NF001938">
    <property type="entry name" value="PRK00714.1-5"/>
    <property type="match status" value="1"/>
</dbReference>
<dbReference type="PANTHER" id="PTHR11839:SF22">
    <property type="entry name" value="NUDIX HYDROLASE 26, CHLOROPLASTIC"/>
    <property type="match status" value="1"/>
</dbReference>
<dbReference type="PANTHER" id="PTHR11839">
    <property type="entry name" value="UDP/ADP-SUGAR PYROPHOSPHATASE"/>
    <property type="match status" value="1"/>
</dbReference>
<dbReference type="Pfam" id="PF00293">
    <property type="entry name" value="NUDIX"/>
    <property type="match status" value="1"/>
</dbReference>
<dbReference type="PRINTS" id="PR00502">
    <property type="entry name" value="NUDIXFAMILY"/>
</dbReference>
<dbReference type="SUPFAM" id="SSF55811">
    <property type="entry name" value="Nudix"/>
    <property type="match status" value="1"/>
</dbReference>
<dbReference type="PROSITE" id="PS51462">
    <property type="entry name" value="NUDIX"/>
    <property type="match status" value="1"/>
</dbReference>
<dbReference type="PROSITE" id="PS00893">
    <property type="entry name" value="NUDIX_BOX"/>
    <property type="match status" value="1"/>
</dbReference>
<feature type="chain" id="PRO_1000078952" description="RNA pyrophosphohydrolase">
    <location>
        <begin position="1"/>
        <end position="173"/>
    </location>
</feature>
<feature type="domain" description="Nudix hydrolase" evidence="1">
    <location>
        <begin position="11"/>
        <end position="164"/>
    </location>
</feature>
<feature type="short sequence motif" description="Nudix box">
    <location>
        <begin position="52"/>
        <end position="73"/>
    </location>
</feature>
<organism>
    <name type="scientific">Bartonella tribocorum (strain CIP 105476 / IBS 506)</name>
    <dbReference type="NCBI Taxonomy" id="382640"/>
    <lineage>
        <taxon>Bacteria</taxon>
        <taxon>Pseudomonadati</taxon>
        <taxon>Pseudomonadota</taxon>
        <taxon>Alphaproteobacteria</taxon>
        <taxon>Hyphomicrobiales</taxon>
        <taxon>Bartonellaceae</taxon>
        <taxon>Bartonella</taxon>
    </lineage>
</organism>
<keyword id="KW-0378">Hydrolase</keyword>
<evidence type="ECO:0000255" key="1">
    <source>
        <dbReference type="HAMAP-Rule" id="MF_00298"/>
    </source>
</evidence>
<name>RPPH_BART1</name>